<gene>
    <name evidence="1" type="primary">rplB</name>
    <name type="ordered locus">RPC_3445</name>
</gene>
<feature type="chain" id="PRO_0000310000" description="Large ribosomal subunit protein uL2">
    <location>
        <begin position="1"/>
        <end position="277"/>
    </location>
</feature>
<feature type="region of interest" description="Disordered" evidence="2">
    <location>
        <begin position="222"/>
        <end position="277"/>
    </location>
</feature>
<organism>
    <name type="scientific">Rhodopseudomonas palustris (strain BisB18)</name>
    <dbReference type="NCBI Taxonomy" id="316056"/>
    <lineage>
        <taxon>Bacteria</taxon>
        <taxon>Pseudomonadati</taxon>
        <taxon>Pseudomonadota</taxon>
        <taxon>Alphaproteobacteria</taxon>
        <taxon>Hyphomicrobiales</taxon>
        <taxon>Nitrobacteraceae</taxon>
        <taxon>Rhodopseudomonas</taxon>
    </lineage>
</organism>
<accession>Q211F1</accession>
<keyword id="KW-0687">Ribonucleoprotein</keyword>
<keyword id="KW-0689">Ribosomal protein</keyword>
<keyword id="KW-0694">RNA-binding</keyword>
<keyword id="KW-0699">rRNA-binding</keyword>
<proteinExistence type="inferred from homology"/>
<protein>
    <recommendedName>
        <fullName evidence="1">Large ribosomal subunit protein uL2</fullName>
    </recommendedName>
    <alternativeName>
        <fullName evidence="3">50S ribosomal protein L2</fullName>
    </alternativeName>
</protein>
<reference key="1">
    <citation type="submission" date="2006-03" db="EMBL/GenBank/DDBJ databases">
        <title>Complete sequence of Rhodopseudomonas palustris BisB18.</title>
        <authorList>
            <consortium name="US DOE Joint Genome Institute"/>
            <person name="Copeland A."/>
            <person name="Lucas S."/>
            <person name="Lapidus A."/>
            <person name="Barry K."/>
            <person name="Detter J.C."/>
            <person name="Glavina del Rio T."/>
            <person name="Hammon N."/>
            <person name="Israni S."/>
            <person name="Dalin E."/>
            <person name="Tice H."/>
            <person name="Pitluck S."/>
            <person name="Chain P."/>
            <person name="Malfatti S."/>
            <person name="Shin M."/>
            <person name="Vergez L."/>
            <person name="Schmutz J."/>
            <person name="Larimer F."/>
            <person name="Land M."/>
            <person name="Hauser L."/>
            <person name="Pelletier D.A."/>
            <person name="Kyrpides N."/>
            <person name="Anderson I."/>
            <person name="Oda Y."/>
            <person name="Harwood C.S."/>
            <person name="Richardson P."/>
        </authorList>
    </citation>
    <scope>NUCLEOTIDE SEQUENCE [LARGE SCALE GENOMIC DNA]</scope>
    <source>
        <strain>BisB18</strain>
    </source>
</reference>
<name>RL2_RHOPB</name>
<comment type="function">
    <text evidence="1">One of the primary rRNA binding proteins. Required for association of the 30S and 50S subunits to form the 70S ribosome, for tRNA binding and peptide bond formation. It has been suggested to have peptidyltransferase activity; this is somewhat controversial. Makes several contacts with the 16S rRNA in the 70S ribosome.</text>
</comment>
<comment type="subunit">
    <text evidence="1">Part of the 50S ribosomal subunit. Forms a bridge to the 30S subunit in the 70S ribosome.</text>
</comment>
<comment type="similarity">
    <text evidence="1">Belongs to the universal ribosomal protein uL2 family.</text>
</comment>
<evidence type="ECO:0000255" key="1">
    <source>
        <dbReference type="HAMAP-Rule" id="MF_01320"/>
    </source>
</evidence>
<evidence type="ECO:0000256" key="2">
    <source>
        <dbReference type="SAM" id="MobiDB-lite"/>
    </source>
</evidence>
<evidence type="ECO:0000305" key="3"/>
<sequence>MALKKFNPTTPGQRQLVMVDRSALYKGKPVKSLTEGKHSAGGRNNTGRIVVRFRGGGHKQTYRIVDFKRTKVDMPAVVERLEYDPNRTAFIALIKYTDGTQAYILAPQRLAVGDTVLAGAYVDVKPGNVMPLGNMPIGTIVHNVELKIGKGGQIARSAGTYAQLVGRDHDYVIVRLNSGEQRLVHGRCTATIGAVSNPDHMNISIGKAGRSRWLGRKPHNRGVTMNPVDHPHGGGEGRTSGGRHPVTPWGKPTKGKKTRSNKSTNKFILISRHKRKK</sequence>
<dbReference type="EMBL" id="CP000301">
    <property type="protein sequence ID" value="ABD88985.1"/>
    <property type="molecule type" value="Genomic_DNA"/>
</dbReference>
<dbReference type="SMR" id="Q211F1"/>
<dbReference type="STRING" id="316056.RPC_3445"/>
<dbReference type="KEGG" id="rpc:RPC_3445"/>
<dbReference type="eggNOG" id="COG0090">
    <property type="taxonomic scope" value="Bacteria"/>
</dbReference>
<dbReference type="HOGENOM" id="CLU_036235_2_1_5"/>
<dbReference type="OrthoDB" id="9778722at2"/>
<dbReference type="GO" id="GO:0015934">
    <property type="term" value="C:large ribosomal subunit"/>
    <property type="evidence" value="ECO:0007669"/>
    <property type="project" value="InterPro"/>
</dbReference>
<dbReference type="GO" id="GO:0019843">
    <property type="term" value="F:rRNA binding"/>
    <property type="evidence" value="ECO:0007669"/>
    <property type="project" value="UniProtKB-UniRule"/>
</dbReference>
<dbReference type="GO" id="GO:0003735">
    <property type="term" value="F:structural constituent of ribosome"/>
    <property type="evidence" value="ECO:0007669"/>
    <property type="project" value="InterPro"/>
</dbReference>
<dbReference type="GO" id="GO:0016740">
    <property type="term" value="F:transferase activity"/>
    <property type="evidence" value="ECO:0007669"/>
    <property type="project" value="InterPro"/>
</dbReference>
<dbReference type="GO" id="GO:0002181">
    <property type="term" value="P:cytoplasmic translation"/>
    <property type="evidence" value="ECO:0007669"/>
    <property type="project" value="TreeGrafter"/>
</dbReference>
<dbReference type="FunFam" id="2.30.30.30:FF:000055">
    <property type="entry name" value="50S ribosomal protein L2"/>
    <property type="match status" value="1"/>
</dbReference>
<dbReference type="FunFam" id="2.40.50.140:FF:000003">
    <property type="entry name" value="50S ribosomal protein L2"/>
    <property type="match status" value="1"/>
</dbReference>
<dbReference type="FunFam" id="4.10.950.10:FF:000001">
    <property type="entry name" value="50S ribosomal protein L2"/>
    <property type="match status" value="1"/>
</dbReference>
<dbReference type="Gene3D" id="2.30.30.30">
    <property type="match status" value="1"/>
</dbReference>
<dbReference type="Gene3D" id="2.40.50.140">
    <property type="entry name" value="Nucleic acid-binding proteins"/>
    <property type="match status" value="1"/>
</dbReference>
<dbReference type="Gene3D" id="4.10.950.10">
    <property type="entry name" value="Ribosomal protein L2, domain 3"/>
    <property type="match status" value="1"/>
</dbReference>
<dbReference type="HAMAP" id="MF_01320_B">
    <property type="entry name" value="Ribosomal_uL2_B"/>
    <property type="match status" value="1"/>
</dbReference>
<dbReference type="InterPro" id="IPR012340">
    <property type="entry name" value="NA-bd_OB-fold"/>
</dbReference>
<dbReference type="InterPro" id="IPR014722">
    <property type="entry name" value="Rib_uL2_dom2"/>
</dbReference>
<dbReference type="InterPro" id="IPR002171">
    <property type="entry name" value="Ribosomal_uL2"/>
</dbReference>
<dbReference type="InterPro" id="IPR005880">
    <property type="entry name" value="Ribosomal_uL2_bac/org-type"/>
</dbReference>
<dbReference type="InterPro" id="IPR022669">
    <property type="entry name" value="Ribosomal_uL2_C"/>
</dbReference>
<dbReference type="InterPro" id="IPR022671">
    <property type="entry name" value="Ribosomal_uL2_CS"/>
</dbReference>
<dbReference type="InterPro" id="IPR014726">
    <property type="entry name" value="Ribosomal_uL2_dom3"/>
</dbReference>
<dbReference type="InterPro" id="IPR022666">
    <property type="entry name" value="Ribosomal_uL2_RNA-bd_dom"/>
</dbReference>
<dbReference type="InterPro" id="IPR008991">
    <property type="entry name" value="Translation_prot_SH3-like_sf"/>
</dbReference>
<dbReference type="NCBIfam" id="TIGR01171">
    <property type="entry name" value="rplB_bact"/>
    <property type="match status" value="1"/>
</dbReference>
<dbReference type="PANTHER" id="PTHR13691:SF5">
    <property type="entry name" value="LARGE RIBOSOMAL SUBUNIT PROTEIN UL2M"/>
    <property type="match status" value="1"/>
</dbReference>
<dbReference type="PANTHER" id="PTHR13691">
    <property type="entry name" value="RIBOSOMAL PROTEIN L2"/>
    <property type="match status" value="1"/>
</dbReference>
<dbReference type="Pfam" id="PF00181">
    <property type="entry name" value="Ribosomal_L2"/>
    <property type="match status" value="1"/>
</dbReference>
<dbReference type="Pfam" id="PF03947">
    <property type="entry name" value="Ribosomal_L2_C"/>
    <property type="match status" value="1"/>
</dbReference>
<dbReference type="PIRSF" id="PIRSF002158">
    <property type="entry name" value="Ribosomal_L2"/>
    <property type="match status" value="1"/>
</dbReference>
<dbReference type="SMART" id="SM01383">
    <property type="entry name" value="Ribosomal_L2"/>
    <property type="match status" value="1"/>
</dbReference>
<dbReference type="SMART" id="SM01382">
    <property type="entry name" value="Ribosomal_L2_C"/>
    <property type="match status" value="1"/>
</dbReference>
<dbReference type="SUPFAM" id="SSF50249">
    <property type="entry name" value="Nucleic acid-binding proteins"/>
    <property type="match status" value="1"/>
</dbReference>
<dbReference type="SUPFAM" id="SSF50104">
    <property type="entry name" value="Translation proteins SH3-like domain"/>
    <property type="match status" value="1"/>
</dbReference>
<dbReference type="PROSITE" id="PS00467">
    <property type="entry name" value="RIBOSOMAL_L2"/>
    <property type="match status" value="1"/>
</dbReference>